<name>TBCEL_HUMAN</name>
<comment type="function">
    <text evidence="4">Acts as a regulator of tubulin stability.</text>
</comment>
<comment type="interaction">
    <interactant intactId="EBI-10244795">
        <id>Q5QJ74</id>
    </interactant>
    <interactant intactId="EBI-20141748">
        <id>P52954</id>
        <label>LBX1</label>
    </interactant>
    <organismsDiffer>false</organismsDiffer>
    <experiments>3</experiments>
</comment>
<comment type="interaction">
    <interactant intactId="EBI-10244795">
        <id>Q5QJ74</id>
    </interactant>
    <interactant intactId="EBI-739832">
        <id>Q8TBB1</id>
        <label>LNX1</label>
    </interactant>
    <organismsDiffer>false</organismsDiffer>
    <experiments>3</experiments>
</comment>
<comment type="interaction">
    <interactant intactId="EBI-10244795">
        <id>Q5QJ74</id>
    </interactant>
    <interactant intactId="EBI-748397">
        <id>P50222</id>
        <label>MEOX2</label>
    </interactant>
    <organismsDiffer>false</organismsDiffer>
    <experiments>3</experiments>
</comment>
<comment type="interaction">
    <interactant intactId="EBI-10244795">
        <id>Q5QJ74</id>
    </interactant>
    <interactant intactId="EBI-9087860">
        <id>P32243-2</id>
        <label>OTX2</label>
    </interactant>
    <organismsDiffer>false</organismsDiffer>
    <experiments>3</experiments>
</comment>
<comment type="interaction">
    <interactant intactId="EBI-10244795">
        <id>Q5QJ74</id>
    </interactant>
    <interactant intactId="EBI-742388">
        <id>Q9H8W4</id>
        <label>PLEKHF2</label>
    </interactant>
    <organismsDiffer>false</organismsDiffer>
    <experiments>3</experiments>
</comment>
<comment type="subcellular location">
    <subcellularLocation>
        <location evidence="5">Cytoplasm</location>
        <location evidence="5">Cytoskeleton</location>
    </subcellularLocation>
</comment>
<comment type="tissue specificity">
    <text evidence="4">Abundantly expressed in testis, but is also present in several tissues at a much lower level.</text>
</comment>
<proteinExistence type="evidence at protein level"/>
<reference key="1">
    <citation type="journal article" date="2005" name="J. Cell Sci.">
        <title>Identification of a novel tubulin-destabilizing protein related to the chaperone cofactor E.</title>
        <authorList>
            <person name="Bartolini F."/>
            <person name="Tian G."/>
            <person name="Piehl M."/>
            <person name="Cassimeris L."/>
            <person name="Lewis S.A."/>
            <person name="Cowan N.J."/>
        </authorList>
    </citation>
    <scope>NUCLEOTIDE SEQUENCE [MRNA]</scope>
    <scope>FUNCTION</scope>
    <scope>TISSUE SPECIFICITY</scope>
</reference>
<reference key="2">
    <citation type="journal article" date="2004" name="Nat. Genet.">
        <title>Complete sequencing and characterization of 21,243 full-length human cDNAs.</title>
        <authorList>
            <person name="Ota T."/>
            <person name="Suzuki Y."/>
            <person name="Nishikawa T."/>
            <person name="Otsuki T."/>
            <person name="Sugiyama T."/>
            <person name="Irie R."/>
            <person name="Wakamatsu A."/>
            <person name="Hayashi K."/>
            <person name="Sato H."/>
            <person name="Nagai K."/>
            <person name="Kimura K."/>
            <person name="Makita H."/>
            <person name="Sekine M."/>
            <person name="Obayashi M."/>
            <person name="Nishi T."/>
            <person name="Shibahara T."/>
            <person name="Tanaka T."/>
            <person name="Ishii S."/>
            <person name="Yamamoto J."/>
            <person name="Saito K."/>
            <person name="Kawai Y."/>
            <person name="Isono Y."/>
            <person name="Nakamura Y."/>
            <person name="Nagahari K."/>
            <person name="Murakami K."/>
            <person name="Yasuda T."/>
            <person name="Iwayanagi T."/>
            <person name="Wagatsuma M."/>
            <person name="Shiratori A."/>
            <person name="Sudo H."/>
            <person name="Hosoiri T."/>
            <person name="Kaku Y."/>
            <person name="Kodaira H."/>
            <person name="Kondo H."/>
            <person name="Sugawara M."/>
            <person name="Takahashi M."/>
            <person name="Kanda K."/>
            <person name="Yokoi T."/>
            <person name="Furuya T."/>
            <person name="Kikkawa E."/>
            <person name="Omura Y."/>
            <person name="Abe K."/>
            <person name="Kamihara K."/>
            <person name="Katsuta N."/>
            <person name="Sato K."/>
            <person name="Tanikawa M."/>
            <person name="Yamazaki M."/>
            <person name="Ninomiya K."/>
            <person name="Ishibashi T."/>
            <person name="Yamashita H."/>
            <person name="Murakawa K."/>
            <person name="Fujimori K."/>
            <person name="Tanai H."/>
            <person name="Kimata M."/>
            <person name="Watanabe M."/>
            <person name="Hiraoka S."/>
            <person name="Chiba Y."/>
            <person name="Ishida S."/>
            <person name="Ono Y."/>
            <person name="Takiguchi S."/>
            <person name="Watanabe S."/>
            <person name="Yosida M."/>
            <person name="Hotuta T."/>
            <person name="Kusano J."/>
            <person name="Kanehori K."/>
            <person name="Takahashi-Fujii A."/>
            <person name="Hara H."/>
            <person name="Tanase T.-O."/>
            <person name="Nomura Y."/>
            <person name="Togiya S."/>
            <person name="Komai F."/>
            <person name="Hara R."/>
            <person name="Takeuchi K."/>
            <person name="Arita M."/>
            <person name="Imose N."/>
            <person name="Musashino K."/>
            <person name="Yuuki H."/>
            <person name="Oshima A."/>
            <person name="Sasaki N."/>
            <person name="Aotsuka S."/>
            <person name="Yoshikawa Y."/>
            <person name="Matsunawa H."/>
            <person name="Ichihara T."/>
            <person name="Shiohata N."/>
            <person name="Sano S."/>
            <person name="Moriya S."/>
            <person name="Momiyama H."/>
            <person name="Satoh N."/>
            <person name="Takami S."/>
            <person name="Terashima Y."/>
            <person name="Suzuki O."/>
            <person name="Nakagawa S."/>
            <person name="Senoh A."/>
            <person name="Mizoguchi H."/>
            <person name="Goto Y."/>
            <person name="Shimizu F."/>
            <person name="Wakebe H."/>
            <person name="Hishigaki H."/>
            <person name="Watanabe T."/>
            <person name="Sugiyama A."/>
            <person name="Takemoto M."/>
            <person name="Kawakami B."/>
            <person name="Yamazaki M."/>
            <person name="Watanabe K."/>
            <person name="Kumagai A."/>
            <person name="Itakura S."/>
            <person name="Fukuzumi Y."/>
            <person name="Fujimori Y."/>
            <person name="Komiyama M."/>
            <person name="Tashiro H."/>
            <person name="Tanigami A."/>
            <person name="Fujiwara T."/>
            <person name="Ono T."/>
            <person name="Yamada K."/>
            <person name="Fujii Y."/>
            <person name="Ozaki K."/>
            <person name="Hirao M."/>
            <person name="Ohmori Y."/>
            <person name="Kawabata A."/>
            <person name="Hikiji T."/>
            <person name="Kobatake N."/>
            <person name="Inagaki H."/>
            <person name="Ikema Y."/>
            <person name="Okamoto S."/>
            <person name="Okitani R."/>
            <person name="Kawakami T."/>
            <person name="Noguchi S."/>
            <person name="Itoh T."/>
            <person name="Shigeta K."/>
            <person name="Senba T."/>
            <person name="Matsumura K."/>
            <person name="Nakajima Y."/>
            <person name="Mizuno T."/>
            <person name="Morinaga M."/>
            <person name="Sasaki M."/>
            <person name="Togashi T."/>
            <person name="Oyama M."/>
            <person name="Hata H."/>
            <person name="Watanabe M."/>
            <person name="Komatsu T."/>
            <person name="Mizushima-Sugano J."/>
            <person name="Satoh T."/>
            <person name="Shirai Y."/>
            <person name="Takahashi Y."/>
            <person name="Nakagawa K."/>
            <person name="Okumura K."/>
            <person name="Nagase T."/>
            <person name="Nomura N."/>
            <person name="Kikuchi H."/>
            <person name="Masuho Y."/>
            <person name="Yamashita R."/>
            <person name="Nakai K."/>
            <person name="Yada T."/>
            <person name="Nakamura Y."/>
            <person name="Ohara O."/>
            <person name="Isogai T."/>
            <person name="Sugano S."/>
        </authorList>
    </citation>
    <scope>NUCLEOTIDE SEQUENCE [LARGE SCALE MRNA]</scope>
    <source>
        <tissue>Hippocampus</tissue>
    </source>
</reference>
<reference key="3">
    <citation type="submission" date="2005-07" db="EMBL/GenBank/DDBJ databases">
        <authorList>
            <person name="Mural R.J."/>
            <person name="Istrail S."/>
            <person name="Sutton G.G."/>
            <person name="Florea L."/>
            <person name="Halpern A.L."/>
            <person name="Mobarry C.M."/>
            <person name="Lippert R."/>
            <person name="Walenz B."/>
            <person name="Shatkay H."/>
            <person name="Dew I."/>
            <person name="Miller J.R."/>
            <person name="Flanigan M.J."/>
            <person name="Edwards N.J."/>
            <person name="Bolanos R."/>
            <person name="Fasulo D."/>
            <person name="Halldorsson B.V."/>
            <person name="Hannenhalli S."/>
            <person name="Turner R."/>
            <person name="Yooseph S."/>
            <person name="Lu F."/>
            <person name="Nusskern D.R."/>
            <person name="Shue B.C."/>
            <person name="Zheng X.H."/>
            <person name="Zhong F."/>
            <person name="Delcher A.L."/>
            <person name="Huson D.H."/>
            <person name="Kravitz S.A."/>
            <person name="Mouchard L."/>
            <person name="Reinert K."/>
            <person name="Remington K.A."/>
            <person name="Clark A.G."/>
            <person name="Waterman M.S."/>
            <person name="Eichler E.E."/>
            <person name="Adams M.D."/>
            <person name="Hunkapiller M.W."/>
            <person name="Myers E.W."/>
            <person name="Venter J.C."/>
        </authorList>
    </citation>
    <scope>NUCLEOTIDE SEQUENCE [LARGE SCALE GENOMIC DNA]</scope>
</reference>
<reference key="4">
    <citation type="journal article" date="2004" name="Genome Res.">
        <title>The status, quality, and expansion of the NIH full-length cDNA project: the Mammalian Gene Collection (MGC).</title>
        <authorList>
            <consortium name="The MGC Project Team"/>
        </authorList>
    </citation>
    <scope>NUCLEOTIDE SEQUENCE [LARGE SCALE MRNA]</scope>
</reference>
<reference key="5">
    <citation type="journal article" date="2013" name="J. Proteome Res.">
        <title>Toward a comprehensive characterization of a human cancer cell phosphoproteome.</title>
        <authorList>
            <person name="Zhou H."/>
            <person name="Di Palma S."/>
            <person name="Preisinger C."/>
            <person name="Peng M."/>
            <person name="Polat A.N."/>
            <person name="Heck A.J."/>
            <person name="Mohammed S."/>
        </authorList>
    </citation>
    <scope>PHOSPHORYLATION [LARGE SCALE ANALYSIS] AT SER-41</scope>
    <scope>IDENTIFICATION BY MASS SPECTROMETRY [LARGE SCALE ANALYSIS]</scope>
    <source>
        <tissue>Erythroleukemia</tissue>
    </source>
</reference>
<organism>
    <name type="scientific">Homo sapiens</name>
    <name type="common">Human</name>
    <dbReference type="NCBI Taxonomy" id="9606"/>
    <lineage>
        <taxon>Eukaryota</taxon>
        <taxon>Metazoa</taxon>
        <taxon>Chordata</taxon>
        <taxon>Craniata</taxon>
        <taxon>Vertebrata</taxon>
        <taxon>Euteleostomi</taxon>
        <taxon>Mammalia</taxon>
        <taxon>Eutheria</taxon>
        <taxon>Euarchontoglires</taxon>
        <taxon>Primates</taxon>
        <taxon>Haplorrhini</taxon>
        <taxon>Catarrhini</taxon>
        <taxon>Hominidae</taxon>
        <taxon>Homo</taxon>
    </lineage>
</organism>
<sequence length="424" mass="48195">MDQPSGRSFMQVLCEKYSPENFPYRRGPGMGVHVPATPQGSPMKDRLNLPSVLVLNSCGITCAGDEKEIAAFCAHVSELDLSDNKLEDWHEVSKIVSNVPQLEFLNLSSNPLNLSVLERTCAGSFSGVRKLVLNNSKASWETVHMILQELPDLEELFLCLNDYETVSCPSICCHSLKLLHITDNNLQDWTEIRKLGVMFPSLDTLVLANNHLNAIEEPDDSLARLFPNLRSISLHKSGLQSWEDIDKLNSFPKLEEVRLLGIPLLQPYTTEERRKLVIARLPSVSKLNGSVVTDGEREDSERFFIRYYVDVPQEEVPFRYHELITKYGKLEPLAEVDLRPQSSAKVEVHFNDQVEEMSIRLDQTVAELKKQLKTLVQLPTSNMLLYYFDHEAPFGPEEMKYSSRALHSFGIRDGDKIYVESKTK</sequence>
<dbReference type="EMBL" id="AY398644">
    <property type="protein sequence ID" value="AAR27875.1"/>
    <property type="molecule type" value="mRNA"/>
</dbReference>
<dbReference type="EMBL" id="AK295673">
    <property type="protein sequence ID" value="BAG58531.1"/>
    <property type="molecule type" value="mRNA"/>
</dbReference>
<dbReference type="EMBL" id="CH471065">
    <property type="protein sequence ID" value="EAW67514.1"/>
    <property type="molecule type" value="Genomic_DNA"/>
</dbReference>
<dbReference type="EMBL" id="BC120988">
    <property type="protein sequence ID" value="AAI20989.1"/>
    <property type="molecule type" value="mRNA"/>
</dbReference>
<dbReference type="CCDS" id="CCDS31692.1"/>
<dbReference type="RefSeq" id="NP_001123519.1">
    <property type="nucleotide sequence ID" value="NM_001130047.3"/>
</dbReference>
<dbReference type="RefSeq" id="NP_001350573.1">
    <property type="nucleotide sequence ID" value="NM_001363644.2"/>
</dbReference>
<dbReference type="RefSeq" id="NP_689928.3">
    <property type="nucleotide sequence ID" value="NM_152715.5"/>
</dbReference>
<dbReference type="RefSeq" id="XP_016872815.1">
    <property type="nucleotide sequence ID" value="XM_017017326.1"/>
</dbReference>
<dbReference type="BioGRID" id="128592">
    <property type="interactions" value="11"/>
</dbReference>
<dbReference type="FunCoup" id="Q5QJ74">
    <property type="interactions" value="1487"/>
</dbReference>
<dbReference type="IntAct" id="Q5QJ74">
    <property type="interactions" value="7"/>
</dbReference>
<dbReference type="STRING" id="9606.ENSP00000403925"/>
<dbReference type="GlyGen" id="Q5QJ74">
    <property type="glycosylation" value="2 sites, 1 N-linked glycan (1 site), 1 O-linked glycan (1 site)"/>
</dbReference>
<dbReference type="iPTMnet" id="Q5QJ74"/>
<dbReference type="PhosphoSitePlus" id="Q5QJ74"/>
<dbReference type="BioMuta" id="TBCEL"/>
<dbReference type="DMDM" id="215273924"/>
<dbReference type="jPOST" id="Q5QJ74"/>
<dbReference type="MassIVE" id="Q5QJ74"/>
<dbReference type="PaxDb" id="9606-ENSP00000403925"/>
<dbReference type="PeptideAtlas" id="Q5QJ74"/>
<dbReference type="ProteomicsDB" id="63619"/>
<dbReference type="Pumba" id="Q5QJ74"/>
<dbReference type="Antibodypedia" id="49450">
    <property type="antibodies" value="163 antibodies from 20 providers"/>
</dbReference>
<dbReference type="DNASU" id="219899"/>
<dbReference type="Ensembl" id="ENST00000422003.6">
    <property type="protein sequence ID" value="ENSP00000403925.2"/>
    <property type="gene ID" value="ENSG00000154114.13"/>
</dbReference>
<dbReference type="Ensembl" id="ENST00000529397.5">
    <property type="protein sequence ID" value="ENSP00000437184.1"/>
    <property type="gene ID" value="ENSG00000154114.13"/>
</dbReference>
<dbReference type="Ensembl" id="ENST00000683345.1">
    <property type="protein sequence ID" value="ENSP00000507873.1"/>
    <property type="gene ID" value="ENSG00000154114.13"/>
</dbReference>
<dbReference type="GeneID" id="219899"/>
<dbReference type="KEGG" id="hsa:219899"/>
<dbReference type="MANE-Select" id="ENST00000683345.1">
    <property type="protein sequence ID" value="ENSP00000507873.1"/>
    <property type="RefSeq nucleotide sequence ID" value="NM_001363644.2"/>
    <property type="RefSeq protein sequence ID" value="NP_001350573.1"/>
</dbReference>
<dbReference type="UCSC" id="uc001pxo.4">
    <property type="organism name" value="human"/>
</dbReference>
<dbReference type="AGR" id="HGNC:28115"/>
<dbReference type="CTD" id="219899"/>
<dbReference type="DisGeNET" id="219899"/>
<dbReference type="GeneCards" id="TBCEL"/>
<dbReference type="HGNC" id="HGNC:28115">
    <property type="gene designation" value="TBCEL"/>
</dbReference>
<dbReference type="HPA" id="ENSG00000154114">
    <property type="expression patterns" value="Low tissue specificity"/>
</dbReference>
<dbReference type="MIM" id="610451">
    <property type="type" value="gene"/>
</dbReference>
<dbReference type="neXtProt" id="NX_Q5QJ74"/>
<dbReference type="OpenTargets" id="ENSG00000154114"/>
<dbReference type="PharmGKB" id="PA162405374"/>
<dbReference type="VEuPathDB" id="HostDB:ENSG00000154114"/>
<dbReference type="eggNOG" id="KOG2982">
    <property type="taxonomic scope" value="Eukaryota"/>
</dbReference>
<dbReference type="GeneTree" id="ENSGT00530000063405"/>
<dbReference type="HOGENOM" id="CLU_017716_1_1_1"/>
<dbReference type="InParanoid" id="Q5QJ74"/>
<dbReference type="OMA" id="MRFPNKQ"/>
<dbReference type="OrthoDB" id="5855206at2759"/>
<dbReference type="PAN-GO" id="Q5QJ74">
    <property type="GO annotations" value="5 GO annotations based on evolutionary models"/>
</dbReference>
<dbReference type="PhylomeDB" id="Q5QJ74"/>
<dbReference type="TreeFam" id="TF320819"/>
<dbReference type="PathwayCommons" id="Q5QJ74"/>
<dbReference type="SignaLink" id="Q5QJ74"/>
<dbReference type="BioGRID-ORCS" id="219899">
    <property type="hits" value="7 hits in 1154 CRISPR screens"/>
</dbReference>
<dbReference type="ChiTaRS" id="TBCEL">
    <property type="organism name" value="human"/>
</dbReference>
<dbReference type="GenomeRNAi" id="219899"/>
<dbReference type="Pharos" id="Q5QJ74">
    <property type="development level" value="Tdark"/>
</dbReference>
<dbReference type="PRO" id="PR:Q5QJ74"/>
<dbReference type="Proteomes" id="UP000005640">
    <property type="component" value="Chromosome 11"/>
</dbReference>
<dbReference type="RNAct" id="Q5QJ74">
    <property type="molecule type" value="protein"/>
</dbReference>
<dbReference type="Bgee" id="ENSG00000154114">
    <property type="expression patterns" value="Expressed in secondary oocyte and 187 other cell types or tissues"/>
</dbReference>
<dbReference type="ExpressionAtlas" id="Q5QJ74">
    <property type="expression patterns" value="baseline and differential"/>
</dbReference>
<dbReference type="GO" id="GO:0005737">
    <property type="term" value="C:cytoplasm"/>
    <property type="evidence" value="ECO:0000318"/>
    <property type="project" value="GO_Central"/>
</dbReference>
<dbReference type="GO" id="GO:0005856">
    <property type="term" value="C:cytoskeleton"/>
    <property type="evidence" value="ECO:0007669"/>
    <property type="project" value="UniProtKB-SubCell"/>
</dbReference>
<dbReference type="GO" id="GO:0043014">
    <property type="term" value="F:alpha-tubulin binding"/>
    <property type="evidence" value="ECO:0000318"/>
    <property type="project" value="GO_Central"/>
</dbReference>
<dbReference type="GO" id="GO:0000226">
    <property type="term" value="P:microtubule cytoskeleton organization"/>
    <property type="evidence" value="ECO:0000318"/>
    <property type="project" value="GO_Central"/>
</dbReference>
<dbReference type="GO" id="GO:0007023">
    <property type="term" value="P:post-chaperonin tubulin folding pathway"/>
    <property type="evidence" value="ECO:0000318"/>
    <property type="project" value="GO_Central"/>
</dbReference>
<dbReference type="GO" id="GO:0007021">
    <property type="term" value="P:tubulin complex assembly"/>
    <property type="evidence" value="ECO:0000318"/>
    <property type="project" value="GO_Central"/>
</dbReference>
<dbReference type="CDD" id="cd17045">
    <property type="entry name" value="Ubl_TBCEL"/>
    <property type="match status" value="1"/>
</dbReference>
<dbReference type="FunFam" id="3.80.10.10:FF:000295">
    <property type="entry name" value="Tubulin-specific chaperone cofactor E-like"/>
    <property type="match status" value="1"/>
</dbReference>
<dbReference type="FunFam" id="3.80.10.10:FF:000304">
    <property type="entry name" value="Tubulin-specific chaperone cofactor E-like"/>
    <property type="match status" value="1"/>
</dbReference>
<dbReference type="FunFam" id="3.80.10.10:FF:000104">
    <property type="entry name" value="Tubulin-specific chaperone cofactor E-like protein"/>
    <property type="match status" value="1"/>
</dbReference>
<dbReference type="FunFam" id="3.10.20.90:FF:000115">
    <property type="entry name" value="tubulin-specific chaperone cofactor E-like protein"/>
    <property type="match status" value="1"/>
</dbReference>
<dbReference type="Gene3D" id="3.10.20.90">
    <property type="entry name" value="Phosphatidylinositol 3-kinase Catalytic Subunit, Chain A, domain 1"/>
    <property type="match status" value="1"/>
</dbReference>
<dbReference type="Gene3D" id="3.80.10.10">
    <property type="entry name" value="Ribonuclease Inhibitor"/>
    <property type="match status" value="2"/>
</dbReference>
<dbReference type="InterPro" id="IPR032675">
    <property type="entry name" value="LRR_dom_sf"/>
</dbReference>
<dbReference type="InterPro" id="IPR047991">
    <property type="entry name" value="TBCEL_Ubl"/>
</dbReference>
<dbReference type="InterPro" id="IPR000626">
    <property type="entry name" value="Ubiquitin-like_dom"/>
</dbReference>
<dbReference type="InterPro" id="IPR029071">
    <property type="entry name" value="Ubiquitin-like_domsf"/>
</dbReference>
<dbReference type="PANTHER" id="PTHR46545">
    <property type="entry name" value="LEUCINE-RICH REPEAT-CONTAINING PROTEIN 51"/>
    <property type="match status" value="1"/>
</dbReference>
<dbReference type="PANTHER" id="PTHR46545:SF1">
    <property type="entry name" value="LEUCINE-RICH REPEAT-CONTAINING PROTEIN 51"/>
    <property type="match status" value="1"/>
</dbReference>
<dbReference type="Pfam" id="PF14580">
    <property type="entry name" value="LRR_9"/>
    <property type="match status" value="1"/>
</dbReference>
<dbReference type="Pfam" id="PF14560">
    <property type="entry name" value="Ubiquitin_2"/>
    <property type="match status" value="1"/>
</dbReference>
<dbReference type="SUPFAM" id="SSF52058">
    <property type="entry name" value="L domain-like"/>
    <property type="match status" value="1"/>
</dbReference>
<dbReference type="SUPFAM" id="SSF54236">
    <property type="entry name" value="Ubiquitin-like"/>
    <property type="match status" value="1"/>
</dbReference>
<dbReference type="PROSITE" id="PS50053">
    <property type="entry name" value="UBIQUITIN_2"/>
    <property type="match status" value="1"/>
</dbReference>
<feature type="chain" id="PRO_0000239668" description="Tubulin-specific chaperone cofactor E-like protein">
    <location>
        <begin position="1"/>
        <end position="424"/>
    </location>
</feature>
<feature type="repeat" description="LRR 1">
    <location>
        <begin position="73"/>
        <end position="98"/>
    </location>
</feature>
<feature type="repeat" description="LRR 2">
    <location>
        <begin position="99"/>
        <end position="123"/>
    </location>
</feature>
<feature type="repeat" description="LRR 3">
    <location>
        <begin position="124"/>
        <end position="147"/>
    </location>
</feature>
<feature type="repeat" description="LRR 4">
    <location>
        <begin position="150"/>
        <end position="172"/>
    </location>
</feature>
<feature type="repeat" description="LRR 5">
    <location>
        <begin position="173"/>
        <end position="197"/>
    </location>
</feature>
<feature type="repeat" description="LRR 6">
    <location>
        <begin position="199"/>
        <end position="224"/>
    </location>
</feature>
<feature type="repeat" description="LRR 7">
    <location>
        <begin position="226"/>
        <end position="250"/>
    </location>
</feature>
<feature type="domain" description="LRRCT">
    <location>
        <begin position="262"/>
        <end position="303"/>
    </location>
</feature>
<feature type="domain" description="Ubiquitin-like" evidence="3">
    <location>
        <begin position="334"/>
        <end position="424"/>
    </location>
</feature>
<feature type="coiled-coil region" evidence="2">
    <location>
        <begin position="349"/>
        <end position="375"/>
    </location>
</feature>
<feature type="modified residue" description="Phosphoserine" evidence="1">
    <location>
        <position position="18"/>
    </location>
</feature>
<feature type="modified residue" description="Phosphoserine" evidence="6">
    <location>
        <position position="41"/>
    </location>
</feature>
<feature type="sequence conflict" description="In Ref. 1; AAR27875." evidence="5" ref="1">
    <original>F</original>
    <variation>V</variation>
    <location>
        <position position="226"/>
    </location>
</feature>
<feature type="sequence conflict" description="In Ref. 1; AAR27875." evidence="5" ref="1">
    <original>K</original>
    <variation>R</variation>
    <location>
        <position position="236"/>
    </location>
</feature>
<feature type="sequence conflict" description="In Ref. 1; AAR27875." evidence="5" ref="1">
    <original>A</original>
    <variation>T</variation>
    <location>
        <position position="334"/>
    </location>
</feature>
<evidence type="ECO:0000250" key="1">
    <source>
        <dbReference type="UniProtKB" id="Q8C5W3"/>
    </source>
</evidence>
<evidence type="ECO:0000255" key="2"/>
<evidence type="ECO:0000255" key="3">
    <source>
        <dbReference type="PROSITE-ProRule" id="PRU00214"/>
    </source>
</evidence>
<evidence type="ECO:0000269" key="4">
    <source>
    </source>
</evidence>
<evidence type="ECO:0000305" key="5"/>
<evidence type="ECO:0007744" key="6">
    <source>
    </source>
</evidence>
<keyword id="KW-0175">Coiled coil</keyword>
<keyword id="KW-0963">Cytoplasm</keyword>
<keyword id="KW-0206">Cytoskeleton</keyword>
<keyword id="KW-0433">Leucine-rich repeat</keyword>
<keyword id="KW-0597">Phosphoprotein</keyword>
<keyword id="KW-1267">Proteomics identification</keyword>
<keyword id="KW-1185">Reference proteome</keyword>
<keyword id="KW-0677">Repeat</keyword>
<gene>
    <name type="primary">TBCEL</name>
    <name type="synonym">LRRC35</name>
</gene>
<protein>
    <recommendedName>
        <fullName>Tubulin-specific chaperone cofactor E-like protein</fullName>
        <shortName>EL</shortName>
    </recommendedName>
    <alternativeName>
        <fullName>Leucine-rich repeat-containing protein 35</fullName>
    </alternativeName>
</protein>
<accession>Q5QJ74</accession>
<accession>Q0VAN6</accession>